<organism>
    <name type="scientific">Beutenbergia cavernae (strain ATCC BAA-8 / DSM 12333 / CCUG 43141 / JCM 11478 / NBRC 16432 / NCIMB 13614 / HKI 0122)</name>
    <dbReference type="NCBI Taxonomy" id="471853"/>
    <lineage>
        <taxon>Bacteria</taxon>
        <taxon>Bacillati</taxon>
        <taxon>Actinomycetota</taxon>
        <taxon>Actinomycetes</taxon>
        <taxon>Micrococcales</taxon>
        <taxon>Beutenbergiaceae</taxon>
        <taxon>Beutenbergia</taxon>
    </lineage>
</organism>
<sequence length="61" mass="6876">MAKTALIQKANSKPKFGVRAYTRCNRCGRPRSVYRKFGLCRICLREMALAGQLPGVTKSSW</sequence>
<evidence type="ECO:0000255" key="1">
    <source>
        <dbReference type="HAMAP-Rule" id="MF_01364"/>
    </source>
</evidence>
<evidence type="ECO:0000305" key="2"/>
<keyword id="KW-0479">Metal-binding</keyword>
<keyword id="KW-1185">Reference proteome</keyword>
<keyword id="KW-0687">Ribonucleoprotein</keyword>
<keyword id="KW-0689">Ribosomal protein</keyword>
<keyword id="KW-0694">RNA-binding</keyword>
<keyword id="KW-0699">rRNA-binding</keyword>
<keyword id="KW-0862">Zinc</keyword>
<reference key="1">
    <citation type="journal article" date="2009" name="Stand. Genomic Sci.">
        <title>Complete genome sequence of Beutenbergia cavernae type strain (HKI 0122).</title>
        <authorList>
            <person name="Land M."/>
            <person name="Pukall R."/>
            <person name="Abt B."/>
            <person name="Goker M."/>
            <person name="Rohde M."/>
            <person name="Glavina Del Rio T."/>
            <person name="Tice H."/>
            <person name="Copeland A."/>
            <person name="Cheng J.F."/>
            <person name="Lucas S."/>
            <person name="Chen F."/>
            <person name="Nolan M."/>
            <person name="Bruce D."/>
            <person name="Goodwin L."/>
            <person name="Pitluck S."/>
            <person name="Ivanova N."/>
            <person name="Mavromatis K."/>
            <person name="Ovchinnikova G."/>
            <person name="Pati A."/>
            <person name="Chen A."/>
            <person name="Palaniappan K."/>
            <person name="Hauser L."/>
            <person name="Chang Y.J."/>
            <person name="Jefferies C.C."/>
            <person name="Saunders E."/>
            <person name="Brettin T."/>
            <person name="Detter J.C."/>
            <person name="Han C."/>
            <person name="Chain P."/>
            <person name="Bristow J."/>
            <person name="Eisen J.A."/>
            <person name="Markowitz V."/>
            <person name="Hugenholtz P."/>
            <person name="Kyrpides N.C."/>
            <person name="Klenk H.P."/>
            <person name="Lapidus A."/>
        </authorList>
    </citation>
    <scope>NUCLEOTIDE SEQUENCE [LARGE SCALE GENOMIC DNA]</scope>
    <source>
        <strain>ATCC BAA-8 / DSM 12333 / CCUG 43141 / JCM 11478 / NBRC 16432 / NCIMB 13614 / HKI 0122</strain>
    </source>
</reference>
<feature type="chain" id="PRO_1000214906" description="Small ribosomal subunit protein uS14">
    <location>
        <begin position="1"/>
        <end position="61"/>
    </location>
</feature>
<feature type="binding site" evidence="1">
    <location>
        <position position="24"/>
    </location>
    <ligand>
        <name>Zn(2+)</name>
        <dbReference type="ChEBI" id="CHEBI:29105"/>
    </ligand>
</feature>
<feature type="binding site" evidence="1">
    <location>
        <position position="27"/>
    </location>
    <ligand>
        <name>Zn(2+)</name>
        <dbReference type="ChEBI" id="CHEBI:29105"/>
    </ligand>
</feature>
<feature type="binding site" evidence="1">
    <location>
        <position position="40"/>
    </location>
    <ligand>
        <name>Zn(2+)</name>
        <dbReference type="ChEBI" id="CHEBI:29105"/>
    </ligand>
</feature>
<feature type="binding site" evidence="1">
    <location>
        <position position="43"/>
    </location>
    <ligand>
        <name>Zn(2+)</name>
        <dbReference type="ChEBI" id="CHEBI:29105"/>
    </ligand>
</feature>
<proteinExistence type="inferred from homology"/>
<comment type="function">
    <text evidence="1">Binds 16S rRNA, required for the assembly of 30S particles and may also be responsible for determining the conformation of the 16S rRNA at the A site.</text>
</comment>
<comment type="cofactor">
    <cofactor evidence="1">
        <name>Zn(2+)</name>
        <dbReference type="ChEBI" id="CHEBI:29105"/>
    </cofactor>
    <text evidence="1">Binds 1 zinc ion per subunit.</text>
</comment>
<comment type="subunit">
    <text evidence="1">Part of the 30S ribosomal subunit. Contacts proteins S3 and S10.</text>
</comment>
<comment type="similarity">
    <text evidence="1">Belongs to the universal ribosomal protein uS14 family. Zinc-binding uS14 subfamily.</text>
</comment>
<name>RS14Z_BEUC1</name>
<dbReference type="EMBL" id="CP001618">
    <property type="protein sequence ID" value="ACQ81374.1"/>
    <property type="molecule type" value="Genomic_DNA"/>
</dbReference>
<dbReference type="RefSeq" id="WP_015883614.1">
    <property type="nucleotide sequence ID" value="NC_012669.1"/>
</dbReference>
<dbReference type="SMR" id="C5C0H8"/>
<dbReference type="STRING" id="471853.Bcav_3130"/>
<dbReference type="KEGG" id="bcv:Bcav_3130"/>
<dbReference type="eggNOG" id="COG0199">
    <property type="taxonomic scope" value="Bacteria"/>
</dbReference>
<dbReference type="HOGENOM" id="CLU_139869_3_0_11"/>
<dbReference type="OrthoDB" id="9810484at2"/>
<dbReference type="Proteomes" id="UP000007962">
    <property type="component" value="Chromosome"/>
</dbReference>
<dbReference type="GO" id="GO:0005737">
    <property type="term" value="C:cytoplasm"/>
    <property type="evidence" value="ECO:0007669"/>
    <property type="project" value="UniProtKB-ARBA"/>
</dbReference>
<dbReference type="GO" id="GO:0015935">
    <property type="term" value="C:small ribosomal subunit"/>
    <property type="evidence" value="ECO:0007669"/>
    <property type="project" value="TreeGrafter"/>
</dbReference>
<dbReference type="GO" id="GO:0019843">
    <property type="term" value="F:rRNA binding"/>
    <property type="evidence" value="ECO:0007669"/>
    <property type="project" value="UniProtKB-UniRule"/>
</dbReference>
<dbReference type="GO" id="GO:0003735">
    <property type="term" value="F:structural constituent of ribosome"/>
    <property type="evidence" value="ECO:0007669"/>
    <property type="project" value="InterPro"/>
</dbReference>
<dbReference type="GO" id="GO:0008270">
    <property type="term" value="F:zinc ion binding"/>
    <property type="evidence" value="ECO:0007669"/>
    <property type="project" value="UniProtKB-UniRule"/>
</dbReference>
<dbReference type="GO" id="GO:0006412">
    <property type="term" value="P:translation"/>
    <property type="evidence" value="ECO:0007669"/>
    <property type="project" value="UniProtKB-UniRule"/>
</dbReference>
<dbReference type="FunFam" id="4.10.830.10:FF:000001">
    <property type="entry name" value="30S ribosomal protein S14 type Z"/>
    <property type="match status" value="1"/>
</dbReference>
<dbReference type="Gene3D" id="4.10.830.10">
    <property type="entry name" value="30s Ribosomal Protein S14, Chain N"/>
    <property type="match status" value="1"/>
</dbReference>
<dbReference type="HAMAP" id="MF_01364_B">
    <property type="entry name" value="Ribosomal_uS14_2_B"/>
    <property type="match status" value="1"/>
</dbReference>
<dbReference type="InterPro" id="IPR001209">
    <property type="entry name" value="Ribosomal_uS14"/>
</dbReference>
<dbReference type="InterPro" id="IPR023053">
    <property type="entry name" value="Ribosomal_uS14_bact"/>
</dbReference>
<dbReference type="InterPro" id="IPR018271">
    <property type="entry name" value="Ribosomal_uS14_CS"/>
</dbReference>
<dbReference type="InterPro" id="IPR043140">
    <property type="entry name" value="Ribosomal_uS14_sf"/>
</dbReference>
<dbReference type="NCBIfam" id="NF005974">
    <property type="entry name" value="PRK08061.1"/>
    <property type="match status" value="1"/>
</dbReference>
<dbReference type="PANTHER" id="PTHR19836">
    <property type="entry name" value="30S RIBOSOMAL PROTEIN S14"/>
    <property type="match status" value="1"/>
</dbReference>
<dbReference type="PANTHER" id="PTHR19836:SF19">
    <property type="entry name" value="SMALL RIBOSOMAL SUBUNIT PROTEIN US14M"/>
    <property type="match status" value="1"/>
</dbReference>
<dbReference type="Pfam" id="PF00253">
    <property type="entry name" value="Ribosomal_S14"/>
    <property type="match status" value="1"/>
</dbReference>
<dbReference type="SUPFAM" id="SSF57716">
    <property type="entry name" value="Glucocorticoid receptor-like (DNA-binding domain)"/>
    <property type="match status" value="1"/>
</dbReference>
<dbReference type="PROSITE" id="PS00527">
    <property type="entry name" value="RIBOSOMAL_S14"/>
    <property type="match status" value="1"/>
</dbReference>
<protein>
    <recommendedName>
        <fullName evidence="1">Small ribosomal subunit protein uS14</fullName>
    </recommendedName>
    <alternativeName>
        <fullName evidence="2">30S ribosomal protein S14 type Z</fullName>
    </alternativeName>
</protein>
<gene>
    <name evidence="1" type="primary">rpsZ</name>
    <name evidence="1" type="synonym">rpsN</name>
    <name type="ordered locus">Bcav_3130</name>
</gene>
<accession>C5C0H8</accession>